<evidence type="ECO:0000255" key="1">
    <source>
        <dbReference type="HAMAP-Rule" id="MF_00054"/>
    </source>
</evidence>
<name>EFG_CAMJ8</name>
<proteinExistence type="inferred from homology"/>
<gene>
    <name evidence="1" type="primary">fusA</name>
    <name type="ordered locus">C8J_0455</name>
</gene>
<reference key="1">
    <citation type="journal article" date="2007" name="J. Bacteriol.">
        <title>The complete genome sequence of Campylobacter jejuni strain 81116 (NCTC11828).</title>
        <authorList>
            <person name="Pearson B.M."/>
            <person name="Gaskin D.J.H."/>
            <person name="Segers R.P.A.M."/>
            <person name="Wells J.M."/>
            <person name="Nuijten P.J.M."/>
            <person name="van Vliet A.H.M."/>
        </authorList>
    </citation>
    <scope>NUCLEOTIDE SEQUENCE [LARGE SCALE GENOMIC DNA]</scope>
    <source>
        <strain>81116 / NCTC 11828</strain>
    </source>
</reference>
<organism>
    <name type="scientific">Campylobacter jejuni subsp. jejuni serotype O:6 (strain 81116 / NCTC 11828)</name>
    <dbReference type="NCBI Taxonomy" id="407148"/>
    <lineage>
        <taxon>Bacteria</taxon>
        <taxon>Pseudomonadati</taxon>
        <taxon>Campylobacterota</taxon>
        <taxon>Epsilonproteobacteria</taxon>
        <taxon>Campylobacterales</taxon>
        <taxon>Campylobacteraceae</taxon>
        <taxon>Campylobacter</taxon>
    </lineage>
</organism>
<protein>
    <recommendedName>
        <fullName evidence="1">Elongation factor G</fullName>
        <shortName evidence="1">EF-G</shortName>
    </recommendedName>
</protein>
<dbReference type="EMBL" id="CP000814">
    <property type="protein sequence ID" value="ABV52054.1"/>
    <property type="molecule type" value="Genomic_DNA"/>
</dbReference>
<dbReference type="RefSeq" id="WP_002779472.1">
    <property type="nucleotide sequence ID" value="NC_009839.1"/>
</dbReference>
<dbReference type="SMR" id="A8FKR7"/>
<dbReference type="KEGG" id="cju:C8J_0455"/>
<dbReference type="HOGENOM" id="CLU_002794_4_1_7"/>
<dbReference type="GO" id="GO:0005737">
    <property type="term" value="C:cytoplasm"/>
    <property type="evidence" value="ECO:0007669"/>
    <property type="project" value="UniProtKB-SubCell"/>
</dbReference>
<dbReference type="GO" id="GO:0005525">
    <property type="term" value="F:GTP binding"/>
    <property type="evidence" value="ECO:0007669"/>
    <property type="project" value="UniProtKB-UniRule"/>
</dbReference>
<dbReference type="GO" id="GO:0003924">
    <property type="term" value="F:GTPase activity"/>
    <property type="evidence" value="ECO:0007669"/>
    <property type="project" value="InterPro"/>
</dbReference>
<dbReference type="GO" id="GO:0003746">
    <property type="term" value="F:translation elongation factor activity"/>
    <property type="evidence" value="ECO:0007669"/>
    <property type="project" value="UniProtKB-UniRule"/>
</dbReference>
<dbReference type="GO" id="GO:0032790">
    <property type="term" value="P:ribosome disassembly"/>
    <property type="evidence" value="ECO:0007669"/>
    <property type="project" value="TreeGrafter"/>
</dbReference>
<dbReference type="CDD" id="cd01886">
    <property type="entry name" value="EF-G"/>
    <property type="match status" value="1"/>
</dbReference>
<dbReference type="CDD" id="cd16262">
    <property type="entry name" value="EFG_III"/>
    <property type="match status" value="1"/>
</dbReference>
<dbReference type="CDD" id="cd01434">
    <property type="entry name" value="EFG_mtEFG1_IV"/>
    <property type="match status" value="1"/>
</dbReference>
<dbReference type="CDD" id="cd03713">
    <property type="entry name" value="EFG_mtEFG_C"/>
    <property type="match status" value="1"/>
</dbReference>
<dbReference type="CDD" id="cd04088">
    <property type="entry name" value="EFG_mtEFG_II"/>
    <property type="match status" value="1"/>
</dbReference>
<dbReference type="FunFam" id="2.40.30.10:FF:000006">
    <property type="entry name" value="Elongation factor G"/>
    <property type="match status" value="1"/>
</dbReference>
<dbReference type="FunFam" id="3.30.230.10:FF:000003">
    <property type="entry name" value="Elongation factor G"/>
    <property type="match status" value="1"/>
</dbReference>
<dbReference type="FunFam" id="3.30.70.240:FF:000001">
    <property type="entry name" value="Elongation factor G"/>
    <property type="match status" value="1"/>
</dbReference>
<dbReference type="FunFam" id="3.30.70.870:FF:000001">
    <property type="entry name" value="Elongation factor G"/>
    <property type="match status" value="1"/>
</dbReference>
<dbReference type="FunFam" id="3.40.50.300:FF:000029">
    <property type="entry name" value="Elongation factor G"/>
    <property type="match status" value="1"/>
</dbReference>
<dbReference type="Gene3D" id="3.30.230.10">
    <property type="match status" value="1"/>
</dbReference>
<dbReference type="Gene3D" id="3.30.70.240">
    <property type="match status" value="1"/>
</dbReference>
<dbReference type="Gene3D" id="3.30.70.870">
    <property type="entry name" value="Elongation Factor G (Translational Gtpase), domain 3"/>
    <property type="match status" value="1"/>
</dbReference>
<dbReference type="Gene3D" id="3.40.50.300">
    <property type="entry name" value="P-loop containing nucleotide triphosphate hydrolases"/>
    <property type="match status" value="1"/>
</dbReference>
<dbReference type="Gene3D" id="2.40.30.10">
    <property type="entry name" value="Translation factors"/>
    <property type="match status" value="1"/>
</dbReference>
<dbReference type="HAMAP" id="MF_00054_B">
    <property type="entry name" value="EF_G_EF_2_B"/>
    <property type="match status" value="1"/>
</dbReference>
<dbReference type="InterPro" id="IPR053905">
    <property type="entry name" value="EF-G-like_DII"/>
</dbReference>
<dbReference type="InterPro" id="IPR041095">
    <property type="entry name" value="EFG_II"/>
</dbReference>
<dbReference type="InterPro" id="IPR009022">
    <property type="entry name" value="EFG_III"/>
</dbReference>
<dbReference type="InterPro" id="IPR035647">
    <property type="entry name" value="EFG_III/V"/>
</dbReference>
<dbReference type="InterPro" id="IPR047872">
    <property type="entry name" value="EFG_IV"/>
</dbReference>
<dbReference type="InterPro" id="IPR035649">
    <property type="entry name" value="EFG_V"/>
</dbReference>
<dbReference type="InterPro" id="IPR000640">
    <property type="entry name" value="EFG_V-like"/>
</dbReference>
<dbReference type="InterPro" id="IPR031157">
    <property type="entry name" value="G_TR_CS"/>
</dbReference>
<dbReference type="InterPro" id="IPR027417">
    <property type="entry name" value="P-loop_NTPase"/>
</dbReference>
<dbReference type="InterPro" id="IPR020568">
    <property type="entry name" value="Ribosomal_Su5_D2-typ_SF"/>
</dbReference>
<dbReference type="InterPro" id="IPR014721">
    <property type="entry name" value="Ribsml_uS5_D2-typ_fold_subgr"/>
</dbReference>
<dbReference type="InterPro" id="IPR005225">
    <property type="entry name" value="Small_GTP-bd"/>
</dbReference>
<dbReference type="InterPro" id="IPR000795">
    <property type="entry name" value="T_Tr_GTP-bd_dom"/>
</dbReference>
<dbReference type="InterPro" id="IPR009000">
    <property type="entry name" value="Transl_B-barrel_sf"/>
</dbReference>
<dbReference type="InterPro" id="IPR004540">
    <property type="entry name" value="Transl_elong_EFG/EF2"/>
</dbReference>
<dbReference type="InterPro" id="IPR005517">
    <property type="entry name" value="Transl_elong_EFG/EF2_IV"/>
</dbReference>
<dbReference type="NCBIfam" id="TIGR00484">
    <property type="entry name" value="EF-G"/>
    <property type="match status" value="1"/>
</dbReference>
<dbReference type="NCBIfam" id="NF009379">
    <property type="entry name" value="PRK12740.1-3"/>
    <property type="match status" value="1"/>
</dbReference>
<dbReference type="NCBIfam" id="NF009381">
    <property type="entry name" value="PRK12740.1-5"/>
    <property type="match status" value="1"/>
</dbReference>
<dbReference type="NCBIfam" id="TIGR00231">
    <property type="entry name" value="small_GTP"/>
    <property type="match status" value="1"/>
</dbReference>
<dbReference type="PANTHER" id="PTHR43261:SF1">
    <property type="entry name" value="RIBOSOME-RELEASING FACTOR 2, MITOCHONDRIAL"/>
    <property type="match status" value="1"/>
</dbReference>
<dbReference type="PANTHER" id="PTHR43261">
    <property type="entry name" value="TRANSLATION ELONGATION FACTOR G-RELATED"/>
    <property type="match status" value="1"/>
</dbReference>
<dbReference type="Pfam" id="PF22042">
    <property type="entry name" value="EF-G_D2"/>
    <property type="match status" value="1"/>
</dbReference>
<dbReference type="Pfam" id="PF00679">
    <property type="entry name" value="EFG_C"/>
    <property type="match status" value="1"/>
</dbReference>
<dbReference type="Pfam" id="PF14492">
    <property type="entry name" value="EFG_III"/>
    <property type="match status" value="1"/>
</dbReference>
<dbReference type="Pfam" id="PF03764">
    <property type="entry name" value="EFG_IV"/>
    <property type="match status" value="1"/>
</dbReference>
<dbReference type="Pfam" id="PF00009">
    <property type="entry name" value="GTP_EFTU"/>
    <property type="match status" value="1"/>
</dbReference>
<dbReference type="PRINTS" id="PR00315">
    <property type="entry name" value="ELONGATNFCT"/>
</dbReference>
<dbReference type="SMART" id="SM00838">
    <property type="entry name" value="EFG_C"/>
    <property type="match status" value="1"/>
</dbReference>
<dbReference type="SMART" id="SM00889">
    <property type="entry name" value="EFG_IV"/>
    <property type="match status" value="1"/>
</dbReference>
<dbReference type="SUPFAM" id="SSF54980">
    <property type="entry name" value="EF-G C-terminal domain-like"/>
    <property type="match status" value="2"/>
</dbReference>
<dbReference type="SUPFAM" id="SSF52540">
    <property type="entry name" value="P-loop containing nucleoside triphosphate hydrolases"/>
    <property type="match status" value="1"/>
</dbReference>
<dbReference type="SUPFAM" id="SSF54211">
    <property type="entry name" value="Ribosomal protein S5 domain 2-like"/>
    <property type="match status" value="1"/>
</dbReference>
<dbReference type="SUPFAM" id="SSF50447">
    <property type="entry name" value="Translation proteins"/>
    <property type="match status" value="1"/>
</dbReference>
<dbReference type="PROSITE" id="PS00301">
    <property type="entry name" value="G_TR_1"/>
    <property type="match status" value="1"/>
</dbReference>
<dbReference type="PROSITE" id="PS51722">
    <property type="entry name" value="G_TR_2"/>
    <property type="match status" value="1"/>
</dbReference>
<comment type="function">
    <text evidence="1">Catalyzes the GTP-dependent ribosomal translocation step during translation elongation. During this step, the ribosome changes from the pre-translocational (PRE) to the post-translocational (POST) state as the newly formed A-site-bound peptidyl-tRNA and P-site-bound deacylated tRNA move to the P and E sites, respectively. Catalyzes the coordinated movement of the two tRNA molecules, the mRNA and conformational changes in the ribosome.</text>
</comment>
<comment type="subcellular location">
    <subcellularLocation>
        <location evidence="1">Cytoplasm</location>
    </subcellularLocation>
</comment>
<comment type="similarity">
    <text evidence="1">Belongs to the TRAFAC class translation factor GTPase superfamily. Classic translation factor GTPase family. EF-G/EF-2 subfamily.</text>
</comment>
<accession>A8FKR7</accession>
<feature type="chain" id="PRO_1000071143" description="Elongation factor G">
    <location>
        <begin position="1"/>
        <end position="691"/>
    </location>
</feature>
<feature type="domain" description="tr-type G">
    <location>
        <begin position="8"/>
        <end position="283"/>
    </location>
</feature>
<feature type="binding site" evidence="1">
    <location>
        <begin position="17"/>
        <end position="24"/>
    </location>
    <ligand>
        <name>GTP</name>
        <dbReference type="ChEBI" id="CHEBI:37565"/>
    </ligand>
</feature>
<feature type="binding site" evidence="1">
    <location>
        <begin position="81"/>
        <end position="85"/>
    </location>
    <ligand>
        <name>GTP</name>
        <dbReference type="ChEBI" id="CHEBI:37565"/>
    </ligand>
</feature>
<feature type="binding site" evidence="1">
    <location>
        <begin position="135"/>
        <end position="138"/>
    </location>
    <ligand>
        <name>GTP</name>
        <dbReference type="ChEBI" id="CHEBI:37565"/>
    </ligand>
</feature>
<keyword id="KW-0963">Cytoplasm</keyword>
<keyword id="KW-0251">Elongation factor</keyword>
<keyword id="KW-0342">GTP-binding</keyword>
<keyword id="KW-0547">Nucleotide-binding</keyword>
<keyword id="KW-0648">Protein biosynthesis</keyword>
<sequence length="691" mass="76719">MSRSTPLKKVRNIGIAAHIDAGKTTTSERILFFTGMSHKIGEVHDGAATMDWMEQEKERGITITSAATTCFWKDHQINLIDTPGHVDFTIEVERSMRVLDGAVAVFCSVGGVQPQSETVWRQANKYGVPRIVFVNKMDRIGANFYNVEDQIRNRLKANPVPLQIPIGAEDNFKGVIDLVTMKALVWEDDTKPTDYVEKEIPAELKEKAEEYRTKMIEAVSETSDELMEKYLGGEELSLEEIKTGIKAGCLSLSIVPMLCGTAFKNKGVQPLLDAVVAYLPAPDEVANIKGEYEDGTEVSVKSTDDGEFAGLAFKIMTDPFVGQLTFVRVYRGCLESGSYAYNSTKDKKERIGRLLKMHSNKREEIKVLYAGEIGAVVGLKDTLTGDTLASEKDKVILERMDFPDPVISVAVEPKTKADQEKMSIALNKLAQEDPSFRVSTDEESGQTIISGMGELHLEIIVDRMLREFKVEAEVGQPQVAYRETIRKTVEQEYKYAKQSGGRGQYGHVFLRLEPLEPGSGYEFVNDIKGGVIPKEYIPAVDKGVQEALQNGVLAGYPVEDVKVTVYDGSYHEVDSSEMAFKLAASMGFKEGARKAGAVILEPMMKVEVETPEDYMGDVIGDLNKRRGQVNSMDERGGNKIITAFCPLAEMFGYSTDLRSQTQGRATYSMEFDHYDEVPKNVADEIIKKRNG</sequence>